<organism>
    <name type="scientific">Cryptogemma periscelida</name>
    <name type="common">Atlantic gem-turris</name>
    <name type="synonym">Gemmula periscelida</name>
    <dbReference type="NCBI Taxonomy" id="394108"/>
    <lineage>
        <taxon>Eukaryota</taxon>
        <taxon>Metazoa</taxon>
        <taxon>Spiralia</taxon>
        <taxon>Lophotrochozoa</taxon>
        <taxon>Mollusca</taxon>
        <taxon>Gastropoda</taxon>
        <taxon>Caenogastropoda</taxon>
        <taxon>Neogastropoda</taxon>
        <taxon>Conoidea</taxon>
        <taxon>Turridae</taxon>
        <taxon>Cryptogemma</taxon>
    </lineage>
</organism>
<name>TUXA_CRYPS</name>
<keyword id="KW-0903">Direct protein sequencing</keyword>
<keyword id="KW-0964">Secreted</keyword>
<keyword id="KW-0800">Toxin</keyword>
<dbReference type="GO" id="GO:0005576">
    <property type="term" value="C:extracellular region"/>
    <property type="evidence" value="ECO:0007669"/>
    <property type="project" value="UniProtKB-SubCell"/>
</dbReference>
<dbReference type="GO" id="GO:0090729">
    <property type="term" value="F:toxin activity"/>
    <property type="evidence" value="ECO:0007669"/>
    <property type="project" value="UniProtKB-KW"/>
</dbReference>
<sequence length="38" mass="4860">RYGRSYAMSHMPMSRMGRKMYQNYMYRRMQATKMMQYH</sequence>
<reference key="1">
    <citation type="journal article" date="2004" name="Toxicon">
        <title>A novel structural class of toxins: the methionine-rich peptides from the venoms of turrid marine snails (Mollusca, Conoidea).</title>
        <authorList>
            <person name="Lopez-Vera E."/>
            <person name="Heimer de la Cotera E.P."/>
            <person name="Maillo M."/>
            <person name="Riesgo-Escovar J.R."/>
            <person name="Olivera B.M."/>
            <person name="Aguilar M.B."/>
        </authorList>
    </citation>
    <scope>PROTEIN SEQUENCE</scope>
    <source>
        <tissue>Venom</tissue>
    </source>
</reference>
<feature type="chain" id="PRO_0000249806" description="Turripeptide GpIAa">
    <location>
        <begin position="1"/>
        <end position="38" status="greater than"/>
    </location>
</feature>
<feature type="chain" id="PRO_0000249807" description="Turripeptide GpIAb">
    <location>
        <begin position="5"/>
        <end position="38" status="greater than"/>
    </location>
</feature>
<feature type="non-terminal residue">
    <location>
        <position position="38"/>
    </location>
</feature>
<comment type="subcellular location">
    <subcellularLocation>
        <location>Secreted</location>
    </subcellularLocation>
</comment>
<comment type="tissue specificity">
    <text>Expressed by the venom duct.</text>
</comment>
<comment type="miscellaneous">
    <text>Turritoxin GpIAa was only sequenced until Lys-33.</text>
</comment>
<comment type="similarity">
    <text evidence="1">Belongs to the turripeptide family.</text>
</comment>
<evidence type="ECO:0000305" key="1"/>
<accession>P0C1X3</accession>
<proteinExistence type="evidence at protein level"/>
<protein>
    <recommendedName>
        <fullName>Turripeptide GpIAa</fullName>
    </recommendedName>
    <component>
        <recommendedName>
            <fullName>Turripeptide GpIAb</fullName>
        </recommendedName>
    </component>
</protein>